<accession>B7JKD8</accession>
<comment type="function">
    <text evidence="1">Binds to the 23S rRNA.</text>
</comment>
<comment type="subunit">
    <text evidence="1">Part of the 50S ribosomal subunit.</text>
</comment>
<comment type="similarity">
    <text evidence="1">Belongs to the universal ribosomal protein uL15 family.</text>
</comment>
<name>RL15_BACC0</name>
<keyword id="KW-0687">Ribonucleoprotein</keyword>
<keyword id="KW-0689">Ribosomal protein</keyword>
<keyword id="KW-0694">RNA-binding</keyword>
<keyword id="KW-0699">rRNA-binding</keyword>
<feature type="chain" id="PRO_1000142772" description="Large ribosomal subunit protein uL15">
    <location>
        <begin position="1"/>
        <end position="146"/>
    </location>
</feature>
<feature type="region of interest" description="Disordered" evidence="2">
    <location>
        <begin position="1"/>
        <end position="52"/>
    </location>
</feature>
<feature type="compositionally biased region" description="Basic and acidic residues" evidence="2">
    <location>
        <begin position="1"/>
        <end position="13"/>
    </location>
</feature>
<feature type="compositionally biased region" description="Gly residues" evidence="2">
    <location>
        <begin position="21"/>
        <end position="31"/>
    </location>
</feature>
<feature type="compositionally biased region" description="Gly residues" evidence="2">
    <location>
        <begin position="42"/>
        <end position="52"/>
    </location>
</feature>
<evidence type="ECO:0000255" key="1">
    <source>
        <dbReference type="HAMAP-Rule" id="MF_01341"/>
    </source>
</evidence>
<evidence type="ECO:0000256" key="2">
    <source>
        <dbReference type="SAM" id="MobiDB-lite"/>
    </source>
</evidence>
<evidence type="ECO:0000305" key="3"/>
<gene>
    <name evidence="1" type="primary">rplO</name>
    <name type="ordered locus">BCAH820_0141</name>
</gene>
<proteinExistence type="inferred from homology"/>
<protein>
    <recommendedName>
        <fullName evidence="1">Large ribosomal subunit protein uL15</fullName>
    </recommendedName>
    <alternativeName>
        <fullName evidence="3">50S ribosomal protein L15</fullName>
    </alternativeName>
</protein>
<dbReference type="EMBL" id="CP001283">
    <property type="protein sequence ID" value="ACK90476.1"/>
    <property type="molecule type" value="Genomic_DNA"/>
</dbReference>
<dbReference type="RefSeq" id="WP_000766080.1">
    <property type="nucleotide sequence ID" value="NC_011773.1"/>
</dbReference>
<dbReference type="SMR" id="B7JKD8"/>
<dbReference type="GeneID" id="93010924"/>
<dbReference type="KEGG" id="bcu:BCAH820_0141"/>
<dbReference type="HOGENOM" id="CLU_055188_4_2_9"/>
<dbReference type="Proteomes" id="UP000001363">
    <property type="component" value="Chromosome"/>
</dbReference>
<dbReference type="GO" id="GO:0022625">
    <property type="term" value="C:cytosolic large ribosomal subunit"/>
    <property type="evidence" value="ECO:0007669"/>
    <property type="project" value="TreeGrafter"/>
</dbReference>
<dbReference type="GO" id="GO:0019843">
    <property type="term" value="F:rRNA binding"/>
    <property type="evidence" value="ECO:0007669"/>
    <property type="project" value="UniProtKB-UniRule"/>
</dbReference>
<dbReference type="GO" id="GO:0003735">
    <property type="term" value="F:structural constituent of ribosome"/>
    <property type="evidence" value="ECO:0007669"/>
    <property type="project" value="InterPro"/>
</dbReference>
<dbReference type="GO" id="GO:0006412">
    <property type="term" value="P:translation"/>
    <property type="evidence" value="ECO:0007669"/>
    <property type="project" value="UniProtKB-UniRule"/>
</dbReference>
<dbReference type="FunFam" id="3.100.10.10:FF:000004">
    <property type="entry name" value="50S ribosomal protein L15"/>
    <property type="match status" value="1"/>
</dbReference>
<dbReference type="Gene3D" id="3.100.10.10">
    <property type="match status" value="1"/>
</dbReference>
<dbReference type="HAMAP" id="MF_01341">
    <property type="entry name" value="Ribosomal_uL15"/>
    <property type="match status" value="1"/>
</dbReference>
<dbReference type="InterPro" id="IPR030878">
    <property type="entry name" value="Ribosomal_uL15"/>
</dbReference>
<dbReference type="InterPro" id="IPR021131">
    <property type="entry name" value="Ribosomal_uL15/eL18"/>
</dbReference>
<dbReference type="InterPro" id="IPR036227">
    <property type="entry name" value="Ribosomal_uL15/eL18_sf"/>
</dbReference>
<dbReference type="InterPro" id="IPR005749">
    <property type="entry name" value="Ribosomal_uL15_bac-type"/>
</dbReference>
<dbReference type="InterPro" id="IPR001196">
    <property type="entry name" value="Ribosomal_uL15_CS"/>
</dbReference>
<dbReference type="NCBIfam" id="TIGR01071">
    <property type="entry name" value="rplO_bact"/>
    <property type="match status" value="1"/>
</dbReference>
<dbReference type="PANTHER" id="PTHR12934">
    <property type="entry name" value="50S RIBOSOMAL PROTEIN L15"/>
    <property type="match status" value="1"/>
</dbReference>
<dbReference type="PANTHER" id="PTHR12934:SF11">
    <property type="entry name" value="LARGE RIBOSOMAL SUBUNIT PROTEIN UL15M"/>
    <property type="match status" value="1"/>
</dbReference>
<dbReference type="Pfam" id="PF00828">
    <property type="entry name" value="Ribosomal_L27A"/>
    <property type="match status" value="1"/>
</dbReference>
<dbReference type="SUPFAM" id="SSF52080">
    <property type="entry name" value="Ribosomal proteins L15p and L18e"/>
    <property type="match status" value="1"/>
</dbReference>
<dbReference type="PROSITE" id="PS00475">
    <property type="entry name" value="RIBOSOMAL_L15"/>
    <property type="match status" value="1"/>
</dbReference>
<organism>
    <name type="scientific">Bacillus cereus (strain AH820)</name>
    <dbReference type="NCBI Taxonomy" id="405535"/>
    <lineage>
        <taxon>Bacteria</taxon>
        <taxon>Bacillati</taxon>
        <taxon>Bacillota</taxon>
        <taxon>Bacilli</taxon>
        <taxon>Bacillales</taxon>
        <taxon>Bacillaceae</taxon>
        <taxon>Bacillus</taxon>
        <taxon>Bacillus cereus group</taxon>
    </lineage>
</organism>
<sequence>MKLHELKPAEGSRKVRNRVGRGIGSGNGKTAGKGHKGQNARSGGGVRLGFEGGQTPLFRRLPKRGFTNINRKEFAIVNLSTLNRFEDGTEVTPELLLETGVISKLNDGVKILASGAVEKKLTVKAHKFSSSAKEAIEAAGGSVEVI</sequence>
<reference key="1">
    <citation type="submission" date="2008-10" db="EMBL/GenBank/DDBJ databases">
        <title>Genome sequence of Bacillus cereus AH820.</title>
        <authorList>
            <person name="Dodson R.J."/>
            <person name="Durkin A.S."/>
            <person name="Rosovitz M.J."/>
            <person name="Rasko D.A."/>
            <person name="Hoffmaster A."/>
            <person name="Ravel J."/>
            <person name="Sutton G."/>
        </authorList>
    </citation>
    <scope>NUCLEOTIDE SEQUENCE [LARGE SCALE GENOMIC DNA]</scope>
    <source>
        <strain>AH820</strain>
    </source>
</reference>